<name>FABZ_KLEP3</name>
<keyword id="KW-0963">Cytoplasm</keyword>
<keyword id="KW-0441">Lipid A biosynthesis</keyword>
<keyword id="KW-0444">Lipid biosynthesis</keyword>
<keyword id="KW-0443">Lipid metabolism</keyword>
<keyword id="KW-0456">Lyase</keyword>
<proteinExistence type="inferred from homology"/>
<protein>
    <recommendedName>
        <fullName evidence="1">3-hydroxyacyl-[acyl-carrier-protein] dehydratase FabZ</fullName>
        <ecNumber evidence="1">4.2.1.59</ecNumber>
    </recommendedName>
    <alternativeName>
        <fullName evidence="1">(3R)-hydroxymyristoyl-[acyl-carrier-protein] dehydratase</fullName>
        <shortName evidence="1">(3R)-hydroxymyristoyl-ACP dehydrase</shortName>
    </alternativeName>
    <alternativeName>
        <fullName evidence="1">Beta-hydroxyacyl-ACP dehydratase</fullName>
    </alternativeName>
</protein>
<sequence length="151" mass="17025">MTTDTHTLHIEEILELLPHRYPFLLVDRVLDFEEGRFLRAVKNVSVNEPFFQGHFPGKPILPGVLILEAMAQATGILAFKSVGKLEPGELYYFAGIDEARFKRPVVPGDQMIMEVTFEKTRRGLTRFKGVALVDGKVVCEATMMCARSREA</sequence>
<accession>B5Y1J1</accession>
<reference key="1">
    <citation type="journal article" date="2008" name="PLoS Genet.">
        <title>Complete genome sequence of the N2-fixing broad host range endophyte Klebsiella pneumoniae 342 and virulence predictions verified in mice.</title>
        <authorList>
            <person name="Fouts D.E."/>
            <person name="Tyler H.L."/>
            <person name="DeBoy R.T."/>
            <person name="Daugherty S."/>
            <person name="Ren Q."/>
            <person name="Badger J.H."/>
            <person name="Durkin A.S."/>
            <person name="Huot H."/>
            <person name="Shrivastava S."/>
            <person name="Kothari S."/>
            <person name="Dodson R.J."/>
            <person name="Mohamoud Y."/>
            <person name="Khouri H."/>
            <person name="Roesch L.F.W."/>
            <person name="Krogfelt K.A."/>
            <person name="Struve C."/>
            <person name="Triplett E.W."/>
            <person name="Methe B.A."/>
        </authorList>
    </citation>
    <scope>NUCLEOTIDE SEQUENCE [LARGE SCALE GENOMIC DNA]</scope>
    <source>
        <strain>342</strain>
    </source>
</reference>
<evidence type="ECO:0000255" key="1">
    <source>
        <dbReference type="HAMAP-Rule" id="MF_00406"/>
    </source>
</evidence>
<comment type="function">
    <text evidence="1">Involved in unsaturated fatty acids biosynthesis. Catalyzes the dehydration of short chain beta-hydroxyacyl-ACPs and long chain saturated and unsaturated beta-hydroxyacyl-ACPs.</text>
</comment>
<comment type="catalytic activity">
    <reaction evidence="1">
        <text>a (3R)-hydroxyacyl-[ACP] = a (2E)-enoyl-[ACP] + H2O</text>
        <dbReference type="Rhea" id="RHEA:13097"/>
        <dbReference type="Rhea" id="RHEA-COMP:9925"/>
        <dbReference type="Rhea" id="RHEA-COMP:9945"/>
        <dbReference type="ChEBI" id="CHEBI:15377"/>
        <dbReference type="ChEBI" id="CHEBI:78784"/>
        <dbReference type="ChEBI" id="CHEBI:78827"/>
        <dbReference type="EC" id="4.2.1.59"/>
    </reaction>
</comment>
<comment type="subcellular location">
    <subcellularLocation>
        <location evidence="1">Cytoplasm</location>
    </subcellularLocation>
</comment>
<comment type="similarity">
    <text evidence="1">Belongs to the thioester dehydratase family. FabZ subfamily.</text>
</comment>
<organism>
    <name type="scientific">Klebsiella pneumoniae (strain 342)</name>
    <dbReference type="NCBI Taxonomy" id="507522"/>
    <lineage>
        <taxon>Bacteria</taxon>
        <taxon>Pseudomonadati</taxon>
        <taxon>Pseudomonadota</taxon>
        <taxon>Gammaproteobacteria</taxon>
        <taxon>Enterobacterales</taxon>
        <taxon>Enterobacteriaceae</taxon>
        <taxon>Klebsiella/Raoultella group</taxon>
        <taxon>Klebsiella</taxon>
        <taxon>Klebsiella pneumoniae complex</taxon>
    </lineage>
</organism>
<feature type="chain" id="PRO_1000123647" description="3-hydroxyacyl-[acyl-carrier-protein] dehydratase FabZ">
    <location>
        <begin position="1"/>
        <end position="151"/>
    </location>
</feature>
<feature type="active site" evidence="1">
    <location>
        <position position="54"/>
    </location>
</feature>
<gene>
    <name evidence="1" type="primary">fabZ</name>
    <name type="ordered locus">KPK_4540</name>
</gene>
<dbReference type="EC" id="4.2.1.59" evidence="1"/>
<dbReference type="EMBL" id="CP000964">
    <property type="protein sequence ID" value="ACI07478.1"/>
    <property type="molecule type" value="Genomic_DNA"/>
</dbReference>
<dbReference type="SMR" id="B5Y1J1"/>
<dbReference type="KEGG" id="kpe:KPK_4540"/>
<dbReference type="HOGENOM" id="CLU_078912_1_0_6"/>
<dbReference type="Proteomes" id="UP000001734">
    <property type="component" value="Chromosome"/>
</dbReference>
<dbReference type="GO" id="GO:0005737">
    <property type="term" value="C:cytoplasm"/>
    <property type="evidence" value="ECO:0007669"/>
    <property type="project" value="UniProtKB-SubCell"/>
</dbReference>
<dbReference type="GO" id="GO:0016020">
    <property type="term" value="C:membrane"/>
    <property type="evidence" value="ECO:0007669"/>
    <property type="project" value="GOC"/>
</dbReference>
<dbReference type="GO" id="GO:0019171">
    <property type="term" value="F:(3R)-hydroxyacyl-[acyl-carrier-protein] dehydratase activity"/>
    <property type="evidence" value="ECO:0007669"/>
    <property type="project" value="UniProtKB-EC"/>
</dbReference>
<dbReference type="GO" id="GO:0006633">
    <property type="term" value="P:fatty acid biosynthetic process"/>
    <property type="evidence" value="ECO:0007669"/>
    <property type="project" value="UniProtKB-UniRule"/>
</dbReference>
<dbReference type="GO" id="GO:0009245">
    <property type="term" value="P:lipid A biosynthetic process"/>
    <property type="evidence" value="ECO:0007669"/>
    <property type="project" value="UniProtKB-UniRule"/>
</dbReference>
<dbReference type="CDD" id="cd01288">
    <property type="entry name" value="FabZ"/>
    <property type="match status" value="1"/>
</dbReference>
<dbReference type="FunFam" id="3.10.129.10:FF:000001">
    <property type="entry name" value="3-hydroxyacyl-[acyl-carrier-protein] dehydratase FabZ"/>
    <property type="match status" value="1"/>
</dbReference>
<dbReference type="Gene3D" id="3.10.129.10">
    <property type="entry name" value="Hotdog Thioesterase"/>
    <property type="match status" value="1"/>
</dbReference>
<dbReference type="HAMAP" id="MF_00406">
    <property type="entry name" value="FabZ"/>
    <property type="match status" value="1"/>
</dbReference>
<dbReference type="InterPro" id="IPR013114">
    <property type="entry name" value="FabA_FabZ"/>
</dbReference>
<dbReference type="InterPro" id="IPR010084">
    <property type="entry name" value="FabZ"/>
</dbReference>
<dbReference type="InterPro" id="IPR029069">
    <property type="entry name" value="HotDog_dom_sf"/>
</dbReference>
<dbReference type="NCBIfam" id="TIGR01750">
    <property type="entry name" value="fabZ"/>
    <property type="match status" value="1"/>
</dbReference>
<dbReference type="NCBIfam" id="NF000582">
    <property type="entry name" value="PRK00006.1"/>
    <property type="match status" value="1"/>
</dbReference>
<dbReference type="PANTHER" id="PTHR30272">
    <property type="entry name" value="3-HYDROXYACYL-[ACYL-CARRIER-PROTEIN] DEHYDRATASE"/>
    <property type="match status" value="1"/>
</dbReference>
<dbReference type="PANTHER" id="PTHR30272:SF1">
    <property type="entry name" value="3-HYDROXYACYL-[ACYL-CARRIER-PROTEIN] DEHYDRATASE"/>
    <property type="match status" value="1"/>
</dbReference>
<dbReference type="Pfam" id="PF07977">
    <property type="entry name" value="FabA"/>
    <property type="match status" value="1"/>
</dbReference>
<dbReference type="SUPFAM" id="SSF54637">
    <property type="entry name" value="Thioesterase/thiol ester dehydrase-isomerase"/>
    <property type="match status" value="1"/>
</dbReference>